<protein>
    <recommendedName>
        <fullName>Protein MelA</fullName>
    </recommendedName>
</protein>
<accession>P23996</accession>
<sequence length="346" mass="39453">MASEQNPLGLLGIEFTEFATPDLDFMHKVFIDFGFSKLKKHKQKDIVYYKQNDINFLLNNEKQGFSAQFAKTHGPAISSMGWRVEDANFAFEGAVARGAKPAADEVKDLPYPAIYGIGDSLIYFIDTFGDDNNIYTSDFEALDEPIITQEKGFIEVDHLTNNVHKGTMEYWSNFYKDIFGFTEVRYFDIKGSQTALISYALRSPDGSFCIPINEGKGDDRNQIDEYLKEYDGPGVQHLAFRSRDIVASLDAMEGSSIQTLDIIPEYYDTIFEKLPQVTEDRDRIKHHQILVDGDEDGYLLQIFTKNLFGPIFIEIIQRKNNLGFGEGNFKALFESIERDQVRRGVL</sequence>
<name>MELA_SHECO</name>
<gene>
    <name type="primary">melA</name>
</gene>
<evidence type="ECO:0000250" key="1"/>
<evidence type="ECO:0000255" key="2">
    <source>
        <dbReference type="PROSITE-ProRule" id="PRU01163"/>
    </source>
</evidence>
<evidence type="ECO:0000305" key="3"/>
<organism>
    <name type="scientific">Shewanella colwelliana</name>
    <name type="common">Alteromonas colwelliana</name>
    <dbReference type="NCBI Taxonomy" id="23"/>
    <lineage>
        <taxon>Bacteria</taxon>
        <taxon>Pseudomonadati</taxon>
        <taxon>Pseudomonadota</taxon>
        <taxon>Gammaproteobacteria</taxon>
        <taxon>Alteromonadales</taxon>
        <taxon>Shewanellaceae</taxon>
        <taxon>Shewanella</taxon>
    </lineage>
</organism>
<dbReference type="EMBL" id="M59289">
    <property type="protein sequence ID" value="AAA26510.1"/>
    <property type="molecule type" value="Genomic_DNA"/>
</dbReference>
<dbReference type="PIR" id="JQ1388">
    <property type="entry name" value="JQ1388"/>
</dbReference>
<dbReference type="SMR" id="P23996"/>
<dbReference type="STRING" id="23.BEL05_04305"/>
<dbReference type="UniPathway" id="UPA00785"/>
<dbReference type="GO" id="GO:0005737">
    <property type="term" value="C:cytoplasm"/>
    <property type="evidence" value="ECO:0007669"/>
    <property type="project" value="UniProtKB-SubCell"/>
</dbReference>
<dbReference type="GO" id="GO:0003868">
    <property type="term" value="F:4-hydroxyphenylpyruvate dioxygenase activity"/>
    <property type="evidence" value="ECO:0007669"/>
    <property type="project" value="InterPro"/>
</dbReference>
<dbReference type="GO" id="GO:0046872">
    <property type="term" value="F:metal ion binding"/>
    <property type="evidence" value="ECO:0007669"/>
    <property type="project" value="UniProtKB-KW"/>
</dbReference>
<dbReference type="GO" id="GO:0042438">
    <property type="term" value="P:melanin biosynthetic process"/>
    <property type="evidence" value="ECO:0007669"/>
    <property type="project" value="UniProtKB-UniPathway"/>
</dbReference>
<dbReference type="GO" id="GO:0006572">
    <property type="term" value="P:tyrosine catabolic process"/>
    <property type="evidence" value="ECO:0007669"/>
    <property type="project" value="TreeGrafter"/>
</dbReference>
<dbReference type="CDD" id="cd07250">
    <property type="entry name" value="HPPD_C_like"/>
    <property type="match status" value="1"/>
</dbReference>
<dbReference type="CDD" id="cd08342">
    <property type="entry name" value="HPPD_N_like"/>
    <property type="match status" value="1"/>
</dbReference>
<dbReference type="FunFam" id="3.10.180.10:FF:000007">
    <property type="entry name" value="4-hydroxyphenylpyruvate dioxygenase"/>
    <property type="match status" value="1"/>
</dbReference>
<dbReference type="Gene3D" id="3.10.180.10">
    <property type="entry name" value="2,3-Dihydroxybiphenyl 1,2-Dioxygenase, domain 1"/>
    <property type="match status" value="2"/>
</dbReference>
<dbReference type="InterPro" id="IPR005956">
    <property type="entry name" value="4OHPhenylPyrv_dOase"/>
</dbReference>
<dbReference type="InterPro" id="IPR041735">
    <property type="entry name" value="4OHPhenylPyrv_dOase_C"/>
</dbReference>
<dbReference type="InterPro" id="IPR041736">
    <property type="entry name" value="4OHPhenylPyrv_dOase_N"/>
</dbReference>
<dbReference type="InterPro" id="IPR029068">
    <property type="entry name" value="Glyas_Bleomycin-R_OHBP_Dase"/>
</dbReference>
<dbReference type="InterPro" id="IPR004360">
    <property type="entry name" value="Glyas_Fos-R_dOase_dom"/>
</dbReference>
<dbReference type="InterPro" id="IPR037523">
    <property type="entry name" value="VOC"/>
</dbReference>
<dbReference type="NCBIfam" id="TIGR01263">
    <property type="entry name" value="4HPPD"/>
    <property type="match status" value="1"/>
</dbReference>
<dbReference type="PANTHER" id="PTHR11959">
    <property type="entry name" value="4-HYDROXYPHENYLPYRUVATE DIOXYGENASE"/>
    <property type="match status" value="1"/>
</dbReference>
<dbReference type="PANTHER" id="PTHR11959:SF1">
    <property type="entry name" value="4-HYDROXYPHENYLPYRUVATE DIOXYGENASE"/>
    <property type="match status" value="1"/>
</dbReference>
<dbReference type="Pfam" id="PF00903">
    <property type="entry name" value="Glyoxalase"/>
    <property type="match status" value="1"/>
</dbReference>
<dbReference type="Pfam" id="PF14696">
    <property type="entry name" value="Glyoxalase_5"/>
    <property type="match status" value="1"/>
</dbReference>
<dbReference type="PIRSF" id="PIRSF009283">
    <property type="entry name" value="HPP_dOase"/>
    <property type="match status" value="1"/>
</dbReference>
<dbReference type="SUPFAM" id="SSF54593">
    <property type="entry name" value="Glyoxalase/Bleomycin resistance protein/Dihydroxybiphenyl dioxygenase"/>
    <property type="match status" value="1"/>
</dbReference>
<dbReference type="PROSITE" id="PS51819">
    <property type="entry name" value="VOC"/>
    <property type="match status" value="2"/>
</dbReference>
<reference key="1">
    <citation type="journal article" date="1991" name="Gene">
        <title>Characterization of melA: a gene encoding melanin biosynthesis from the marine bacterium Shewanella colwelliana.</title>
        <authorList>
            <person name="Fuqua W.C."/>
            <person name="Coyne V.E."/>
            <person name="Stein D.C."/>
            <person name="Lin C.-M."/>
            <person name="Weiner R.M."/>
        </authorList>
    </citation>
    <scope>NUCLEOTIDE SEQUENCE [GENOMIC DNA]</scope>
</reference>
<comment type="cofactor">
    <cofactor evidence="1">
        <name>Fe cation</name>
        <dbReference type="ChEBI" id="CHEBI:24875"/>
    </cofactor>
    <text evidence="1">Binds 1 Fe cation per subunit.</text>
</comment>
<comment type="pathway">
    <text>Pigment biosynthesis; melanin biosynthesis.</text>
</comment>
<comment type="subcellular location">
    <subcellularLocation>
        <location>Cytoplasm</location>
    </subcellularLocation>
</comment>
<comment type="induction">
    <text>By L-tyrosine.</text>
</comment>
<comment type="similarity">
    <text evidence="3">Belongs to the 4HPPD family.</text>
</comment>
<proteinExistence type="evidence at transcript level"/>
<keyword id="KW-0963">Cytoplasm</keyword>
<keyword id="KW-0408">Iron</keyword>
<keyword id="KW-0470">Melanin biosynthesis</keyword>
<keyword id="KW-0479">Metal-binding</keyword>
<keyword id="KW-0677">Repeat</keyword>
<feature type="chain" id="PRO_0000088411" description="Protein MelA">
    <location>
        <begin position="1"/>
        <end position="346"/>
    </location>
</feature>
<feature type="domain" description="VOC 1" evidence="2">
    <location>
        <begin position="12"/>
        <end position="141"/>
    </location>
</feature>
<feature type="domain" description="VOC 2" evidence="2">
    <location>
        <begin position="155"/>
        <end position="305"/>
    </location>
</feature>
<feature type="binding site" evidence="1">
    <location>
        <position position="158"/>
    </location>
    <ligand>
        <name>Fe cation</name>
        <dbReference type="ChEBI" id="CHEBI:24875"/>
    </ligand>
</feature>
<feature type="binding site" evidence="1">
    <location>
        <position position="237"/>
    </location>
    <ligand>
        <name>Fe cation</name>
        <dbReference type="ChEBI" id="CHEBI:24875"/>
    </ligand>
</feature>
<feature type="binding site" evidence="1">
    <location>
        <position position="314"/>
    </location>
    <ligand>
        <name>Fe cation</name>
        <dbReference type="ChEBI" id="CHEBI:24875"/>
    </ligand>
</feature>